<evidence type="ECO:0000255" key="1">
    <source>
        <dbReference type="HAMAP-Rule" id="MF_01333"/>
    </source>
</evidence>
<evidence type="ECO:0000305" key="2"/>
<comment type="function">
    <text evidence="1">This is one of the proteins that bind and probably mediate the attachment of the 5S RNA into the large ribosomal subunit, where it forms part of the central protuberance. In the 70S ribosome it contacts protein S13 of the 30S subunit (bridge B1b), connecting the 2 subunits; this bridge is implicated in subunit movement. Contacts the P site tRNA; the 5S rRNA and some of its associated proteins might help stabilize positioning of ribosome-bound tRNAs.</text>
</comment>
<comment type="subunit">
    <text evidence="1">Part of the 50S ribosomal subunit; part of the 5S rRNA/L5/L18/L25 subcomplex. Contacts the 5S rRNA and the P site tRNA. Forms a bridge to the 30S subunit in the 70S ribosome.</text>
</comment>
<comment type="similarity">
    <text evidence="1">Belongs to the universal ribosomal protein uL5 family.</text>
</comment>
<dbReference type="EMBL" id="AE017282">
    <property type="protein sequence ID" value="AAU91475.1"/>
    <property type="molecule type" value="Genomic_DNA"/>
</dbReference>
<dbReference type="RefSeq" id="WP_010961588.1">
    <property type="nucleotide sequence ID" value="NC_002977.6"/>
</dbReference>
<dbReference type="SMR" id="Q605C4"/>
<dbReference type="STRING" id="243233.MCA2360"/>
<dbReference type="GeneID" id="88224562"/>
<dbReference type="KEGG" id="mca:MCA2360"/>
<dbReference type="eggNOG" id="COG0094">
    <property type="taxonomic scope" value="Bacteria"/>
</dbReference>
<dbReference type="HOGENOM" id="CLU_061015_2_1_6"/>
<dbReference type="Proteomes" id="UP000006821">
    <property type="component" value="Chromosome"/>
</dbReference>
<dbReference type="GO" id="GO:1990904">
    <property type="term" value="C:ribonucleoprotein complex"/>
    <property type="evidence" value="ECO:0007669"/>
    <property type="project" value="UniProtKB-KW"/>
</dbReference>
<dbReference type="GO" id="GO:0005840">
    <property type="term" value="C:ribosome"/>
    <property type="evidence" value="ECO:0007669"/>
    <property type="project" value="UniProtKB-KW"/>
</dbReference>
<dbReference type="GO" id="GO:0019843">
    <property type="term" value="F:rRNA binding"/>
    <property type="evidence" value="ECO:0007669"/>
    <property type="project" value="UniProtKB-UniRule"/>
</dbReference>
<dbReference type="GO" id="GO:0003735">
    <property type="term" value="F:structural constituent of ribosome"/>
    <property type="evidence" value="ECO:0007669"/>
    <property type="project" value="InterPro"/>
</dbReference>
<dbReference type="GO" id="GO:0000049">
    <property type="term" value="F:tRNA binding"/>
    <property type="evidence" value="ECO:0007669"/>
    <property type="project" value="UniProtKB-UniRule"/>
</dbReference>
<dbReference type="GO" id="GO:0006412">
    <property type="term" value="P:translation"/>
    <property type="evidence" value="ECO:0007669"/>
    <property type="project" value="UniProtKB-UniRule"/>
</dbReference>
<dbReference type="FunFam" id="3.30.1440.10:FF:000001">
    <property type="entry name" value="50S ribosomal protein L5"/>
    <property type="match status" value="1"/>
</dbReference>
<dbReference type="Gene3D" id="3.30.1440.10">
    <property type="match status" value="1"/>
</dbReference>
<dbReference type="HAMAP" id="MF_01333_B">
    <property type="entry name" value="Ribosomal_uL5_B"/>
    <property type="match status" value="1"/>
</dbReference>
<dbReference type="InterPro" id="IPR002132">
    <property type="entry name" value="Ribosomal_uL5"/>
</dbReference>
<dbReference type="InterPro" id="IPR020930">
    <property type="entry name" value="Ribosomal_uL5_bac-type"/>
</dbReference>
<dbReference type="InterPro" id="IPR031309">
    <property type="entry name" value="Ribosomal_uL5_C"/>
</dbReference>
<dbReference type="InterPro" id="IPR022803">
    <property type="entry name" value="Ribosomal_uL5_dom_sf"/>
</dbReference>
<dbReference type="InterPro" id="IPR031310">
    <property type="entry name" value="Ribosomal_uL5_N"/>
</dbReference>
<dbReference type="NCBIfam" id="NF000585">
    <property type="entry name" value="PRK00010.1"/>
    <property type="match status" value="1"/>
</dbReference>
<dbReference type="PANTHER" id="PTHR11994">
    <property type="entry name" value="60S RIBOSOMAL PROTEIN L11-RELATED"/>
    <property type="match status" value="1"/>
</dbReference>
<dbReference type="Pfam" id="PF00281">
    <property type="entry name" value="Ribosomal_L5"/>
    <property type="match status" value="1"/>
</dbReference>
<dbReference type="Pfam" id="PF00673">
    <property type="entry name" value="Ribosomal_L5_C"/>
    <property type="match status" value="1"/>
</dbReference>
<dbReference type="PIRSF" id="PIRSF002161">
    <property type="entry name" value="Ribosomal_L5"/>
    <property type="match status" value="1"/>
</dbReference>
<dbReference type="SUPFAM" id="SSF55282">
    <property type="entry name" value="RL5-like"/>
    <property type="match status" value="1"/>
</dbReference>
<gene>
    <name evidence="1" type="primary">rplE</name>
    <name type="ordered locus">MCA2360</name>
</gene>
<sequence length="179" mass="20236">MARLENHYKEKVVPELMARFGYKSVMEVPRLVKITLNMGVGEAVADKKILQNAVENMQAIGGQKPIVTHARKSIAGFKIREGMPVGCKVTLRRARMYEFLDRLISVAIPRIRDFRGLNPKAFDGRGNYSMGVREQIIFPEIDYDKIDAIRGMDITITSTAKTDAEAKALLEAFKFPFRT</sequence>
<reference key="1">
    <citation type="journal article" date="2004" name="PLoS Biol.">
        <title>Genomic insights into methanotrophy: the complete genome sequence of Methylococcus capsulatus (Bath).</title>
        <authorList>
            <person name="Ward N.L."/>
            <person name="Larsen O."/>
            <person name="Sakwa J."/>
            <person name="Bruseth L."/>
            <person name="Khouri H.M."/>
            <person name="Durkin A.S."/>
            <person name="Dimitrov G."/>
            <person name="Jiang L."/>
            <person name="Scanlan D."/>
            <person name="Kang K.H."/>
            <person name="Lewis M.R."/>
            <person name="Nelson K.E."/>
            <person name="Methe B.A."/>
            <person name="Wu M."/>
            <person name="Heidelberg J.F."/>
            <person name="Paulsen I.T."/>
            <person name="Fouts D.E."/>
            <person name="Ravel J."/>
            <person name="Tettelin H."/>
            <person name="Ren Q."/>
            <person name="Read T.D."/>
            <person name="DeBoy R.T."/>
            <person name="Seshadri R."/>
            <person name="Salzberg S.L."/>
            <person name="Jensen H.B."/>
            <person name="Birkeland N.K."/>
            <person name="Nelson W.C."/>
            <person name="Dodson R.J."/>
            <person name="Grindhaug S.H."/>
            <person name="Holt I.E."/>
            <person name="Eidhammer I."/>
            <person name="Jonasen I."/>
            <person name="Vanaken S."/>
            <person name="Utterback T.R."/>
            <person name="Feldblyum T.V."/>
            <person name="Fraser C.M."/>
            <person name="Lillehaug J.R."/>
            <person name="Eisen J.A."/>
        </authorList>
    </citation>
    <scope>NUCLEOTIDE SEQUENCE [LARGE SCALE GENOMIC DNA]</scope>
    <source>
        <strain>ATCC 33009 / NCIMB 11132 / Bath</strain>
    </source>
</reference>
<protein>
    <recommendedName>
        <fullName evidence="1">Large ribosomal subunit protein uL5</fullName>
    </recommendedName>
    <alternativeName>
        <fullName evidence="2">50S ribosomal protein L5</fullName>
    </alternativeName>
</protein>
<keyword id="KW-1185">Reference proteome</keyword>
<keyword id="KW-0687">Ribonucleoprotein</keyword>
<keyword id="KW-0689">Ribosomal protein</keyword>
<keyword id="KW-0694">RNA-binding</keyword>
<keyword id="KW-0699">rRNA-binding</keyword>
<keyword id="KW-0820">tRNA-binding</keyword>
<organism>
    <name type="scientific">Methylococcus capsulatus (strain ATCC 33009 / NCIMB 11132 / Bath)</name>
    <dbReference type="NCBI Taxonomy" id="243233"/>
    <lineage>
        <taxon>Bacteria</taxon>
        <taxon>Pseudomonadati</taxon>
        <taxon>Pseudomonadota</taxon>
        <taxon>Gammaproteobacteria</taxon>
        <taxon>Methylococcales</taxon>
        <taxon>Methylococcaceae</taxon>
        <taxon>Methylococcus</taxon>
    </lineage>
</organism>
<accession>Q605C4</accession>
<proteinExistence type="inferred from homology"/>
<name>RL5_METCA</name>
<feature type="chain" id="PRO_0000243020" description="Large ribosomal subunit protein uL5">
    <location>
        <begin position="1"/>
        <end position="179"/>
    </location>
</feature>